<organism>
    <name type="scientific">Desulfitobacterium hafniense (strain Y51)</name>
    <dbReference type="NCBI Taxonomy" id="138119"/>
    <lineage>
        <taxon>Bacteria</taxon>
        <taxon>Bacillati</taxon>
        <taxon>Bacillota</taxon>
        <taxon>Clostridia</taxon>
        <taxon>Eubacteriales</taxon>
        <taxon>Desulfitobacteriaceae</taxon>
        <taxon>Desulfitobacterium</taxon>
    </lineage>
</organism>
<sequence length="150" mass="16712">MKTRRQMKIQEIINNQVIHTQEELAELLRKAGFDVTQATVSRDIKEMGLIKVPTSEDDYRYAVPGTAQPLSTPDRLKRRLRETVVTVNDSENLVVLRTIPGNAQALASLIDHSNWEEVIGTVAGDDTILLVVKPAGAVPSVRERIAKLMQ</sequence>
<protein>
    <recommendedName>
        <fullName evidence="1">Arginine repressor</fullName>
    </recommendedName>
</protein>
<name>ARGR_DESHY</name>
<reference key="1">
    <citation type="journal article" date="2006" name="J. Bacteriol.">
        <title>Complete genome sequence of the dehalorespiring bacterium Desulfitobacterium hafniense Y51 and comparison with Dehalococcoides ethenogenes 195.</title>
        <authorList>
            <person name="Nonaka H."/>
            <person name="Keresztes G."/>
            <person name="Shinoda Y."/>
            <person name="Ikenaga Y."/>
            <person name="Abe M."/>
            <person name="Naito K."/>
            <person name="Inatomi K."/>
            <person name="Furukawa K."/>
            <person name="Inui M."/>
            <person name="Yukawa H."/>
        </authorList>
    </citation>
    <scope>NUCLEOTIDE SEQUENCE [LARGE SCALE GENOMIC DNA]</scope>
    <source>
        <strain>Y51</strain>
    </source>
</reference>
<dbReference type="EMBL" id="AP008230">
    <property type="protein sequence ID" value="BAE84133.1"/>
    <property type="molecule type" value="Genomic_DNA"/>
</dbReference>
<dbReference type="RefSeq" id="WP_005810957.1">
    <property type="nucleotide sequence ID" value="NC_007907.1"/>
</dbReference>
<dbReference type="SMR" id="Q24V09"/>
<dbReference type="STRING" id="138119.DSY2344"/>
<dbReference type="KEGG" id="dsy:DSY2344"/>
<dbReference type="eggNOG" id="COG1438">
    <property type="taxonomic scope" value="Bacteria"/>
</dbReference>
<dbReference type="HOGENOM" id="CLU_097103_3_0_9"/>
<dbReference type="UniPathway" id="UPA00068"/>
<dbReference type="Proteomes" id="UP000001946">
    <property type="component" value="Chromosome"/>
</dbReference>
<dbReference type="GO" id="GO:0005737">
    <property type="term" value="C:cytoplasm"/>
    <property type="evidence" value="ECO:0007669"/>
    <property type="project" value="UniProtKB-SubCell"/>
</dbReference>
<dbReference type="GO" id="GO:0034618">
    <property type="term" value="F:arginine binding"/>
    <property type="evidence" value="ECO:0007669"/>
    <property type="project" value="InterPro"/>
</dbReference>
<dbReference type="GO" id="GO:0003677">
    <property type="term" value="F:DNA binding"/>
    <property type="evidence" value="ECO:0007669"/>
    <property type="project" value="UniProtKB-KW"/>
</dbReference>
<dbReference type="GO" id="GO:0003700">
    <property type="term" value="F:DNA-binding transcription factor activity"/>
    <property type="evidence" value="ECO:0007669"/>
    <property type="project" value="UniProtKB-UniRule"/>
</dbReference>
<dbReference type="GO" id="GO:0006526">
    <property type="term" value="P:L-arginine biosynthetic process"/>
    <property type="evidence" value="ECO:0007669"/>
    <property type="project" value="UniProtKB-UniPathway"/>
</dbReference>
<dbReference type="GO" id="GO:0051259">
    <property type="term" value="P:protein complex oligomerization"/>
    <property type="evidence" value="ECO:0007669"/>
    <property type="project" value="InterPro"/>
</dbReference>
<dbReference type="GO" id="GO:1900079">
    <property type="term" value="P:regulation of arginine biosynthetic process"/>
    <property type="evidence" value="ECO:0007669"/>
    <property type="project" value="UniProtKB-UniRule"/>
</dbReference>
<dbReference type="Gene3D" id="3.30.1360.40">
    <property type="match status" value="1"/>
</dbReference>
<dbReference type="Gene3D" id="1.10.10.10">
    <property type="entry name" value="Winged helix-like DNA-binding domain superfamily/Winged helix DNA-binding domain"/>
    <property type="match status" value="1"/>
</dbReference>
<dbReference type="HAMAP" id="MF_00173">
    <property type="entry name" value="Arg_repressor"/>
    <property type="match status" value="1"/>
</dbReference>
<dbReference type="InterPro" id="IPR001669">
    <property type="entry name" value="Arg_repress"/>
</dbReference>
<dbReference type="InterPro" id="IPR020899">
    <property type="entry name" value="Arg_repress_C"/>
</dbReference>
<dbReference type="InterPro" id="IPR036251">
    <property type="entry name" value="Arg_repress_C_sf"/>
</dbReference>
<dbReference type="InterPro" id="IPR020900">
    <property type="entry name" value="Arg_repress_DNA-bd"/>
</dbReference>
<dbReference type="InterPro" id="IPR036388">
    <property type="entry name" value="WH-like_DNA-bd_sf"/>
</dbReference>
<dbReference type="InterPro" id="IPR036390">
    <property type="entry name" value="WH_DNA-bd_sf"/>
</dbReference>
<dbReference type="NCBIfam" id="TIGR01529">
    <property type="entry name" value="argR_whole"/>
    <property type="match status" value="1"/>
</dbReference>
<dbReference type="PANTHER" id="PTHR34471">
    <property type="entry name" value="ARGININE REPRESSOR"/>
    <property type="match status" value="1"/>
</dbReference>
<dbReference type="PANTHER" id="PTHR34471:SF1">
    <property type="entry name" value="ARGININE REPRESSOR"/>
    <property type="match status" value="1"/>
</dbReference>
<dbReference type="Pfam" id="PF01316">
    <property type="entry name" value="Arg_repressor"/>
    <property type="match status" value="1"/>
</dbReference>
<dbReference type="Pfam" id="PF02863">
    <property type="entry name" value="Arg_repressor_C"/>
    <property type="match status" value="1"/>
</dbReference>
<dbReference type="PRINTS" id="PR01467">
    <property type="entry name" value="ARGREPRESSOR"/>
</dbReference>
<dbReference type="SUPFAM" id="SSF55252">
    <property type="entry name" value="C-terminal domain of arginine repressor"/>
    <property type="match status" value="1"/>
</dbReference>
<dbReference type="SUPFAM" id="SSF46785">
    <property type="entry name" value="Winged helix' DNA-binding domain"/>
    <property type="match status" value="1"/>
</dbReference>
<proteinExistence type="inferred from homology"/>
<feature type="chain" id="PRO_1000023562" description="Arginine repressor">
    <location>
        <begin position="1"/>
        <end position="150"/>
    </location>
</feature>
<keyword id="KW-0028">Amino-acid biosynthesis</keyword>
<keyword id="KW-0055">Arginine biosynthesis</keyword>
<keyword id="KW-0963">Cytoplasm</keyword>
<keyword id="KW-0238">DNA-binding</keyword>
<keyword id="KW-1185">Reference proteome</keyword>
<keyword id="KW-0678">Repressor</keyword>
<keyword id="KW-0804">Transcription</keyword>
<keyword id="KW-0805">Transcription regulation</keyword>
<evidence type="ECO:0000255" key="1">
    <source>
        <dbReference type="HAMAP-Rule" id="MF_00173"/>
    </source>
</evidence>
<gene>
    <name evidence="1" type="primary">argR</name>
    <name type="ordered locus">DSY2344</name>
</gene>
<comment type="function">
    <text evidence="1">Regulates arginine biosynthesis genes.</text>
</comment>
<comment type="pathway">
    <text>Amino-acid biosynthesis; L-arginine biosynthesis [regulation].</text>
</comment>
<comment type="subcellular location">
    <subcellularLocation>
        <location evidence="1">Cytoplasm</location>
    </subcellularLocation>
</comment>
<comment type="similarity">
    <text evidence="1">Belongs to the ArgR family.</text>
</comment>
<accession>Q24V09</accession>